<name>ATR10_STAC4</name>
<organism>
    <name type="scientific">Stachybotrys chlorohalonatus (strain IBT 40285)</name>
    <dbReference type="NCBI Taxonomy" id="1283841"/>
    <lineage>
        <taxon>Eukaryota</taxon>
        <taxon>Fungi</taxon>
        <taxon>Dikarya</taxon>
        <taxon>Ascomycota</taxon>
        <taxon>Pezizomycotina</taxon>
        <taxon>Sordariomycetes</taxon>
        <taxon>Hypocreomycetidae</taxon>
        <taxon>Hypocreales</taxon>
        <taxon>Stachybotryaceae</taxon>
        <taxon>Stachybotrys</taxon>
    </lineage>
</organism>
<keyword id="KW-0503">Monooxygenase</keyword>
<keyword id="KW-0521">NADP</keyword>
<keyword id="KW-0560">Oxidoreductase</keyword>
<keyword id="KW-1185">Reference proteome</keyword>
<reference key="1">
    <citation type="journal article" date="2014" name="BMC Genomics">
        <title>Comparative genome sequencing reveals chemotype-specific gene clusters in the toxigenic black mold Stachybotrys.</title>
        <authorList>
            <person name="Semeiks J."/>
            <person name="Borek D."/>
            <person name="Otwinowski Z."/>
            <person name="Grishin N.V."/>
        </authorList>
    </citation>
    <scope>NUCLEOTIDE SEQUENCE [LARGE SCALE GENOMIC DNA]</scope>
    <scope>IDENTIFICATION</scope>
    <scope>FUNCTION</scope>
    <source>
        <strain>IBT 40285</strain>
    </source>
</reference>
<protein>
    <recommendedName>
        <fullName evidence="4">Short-chain dehydrogenase/reductase ATR10</fullName>
        <ecNumber evidence="6">1.-.-.-</ecNumber>
    </recommendedName>
    <alternativeName>
        <fullName evidence="4">Core atranone cluster (CAC) protein 10</fullName>
    </alternativeName>
</protein>
<dbReference type="EC" id="1.-.-.-" evidence="6"/>
<dbReference type="EMBL" id="KL659308">
    <property type="protein sequence ID" value="KFA70069.1"/>
    <property type="molecule type" value="Genomic_DNA"/>
</dbReference>
<dbReference type="SMR" id="A0A084R1I4"/>
<dbReference type="STRING" id="1283841.A0A084R1I4"/>
<dbReference type="HOGENOM" id="CLU_010194_9_0_1"/>
<dbReference type="InParanoid" id="A0A084R1I4"/>
<dbReference type="OMA" id="EIVETWP"/>
<dbReference type="OrthoDB" id="1933717at2759"/>
<dbReference type="Proteomes" id="UP000028524">
    <property type="component" value="Unassembled WGS sequence"/>
</dbReference>
<dbReference type="GO" id="GO:0004497">
    <property type="term" value="F:monooxygenase activity"/>
    <property type="evidence" value="ECO:0007669"/>
    <property type="project" value="UniProtKB-KW"/>
</dbReference>
<dbReference type="Gene3D" id="3.40.50.720">
    <property type="entry name" value="NAD(P)-binding Rossmann-like Domain"/>
    <property type="match status" value="1"/>
</dbReference>
<dbReference type="InterPro" id="IPR036291">
    <property type="entry name" value="NAD(P)-bd_dom_sf"/>
</dbReference>
<dbReference type="InterPro" id="IPR002347">
    <property type="entry name" value="SDR_fam"/>
</dbReference>
<dbReference type="PANTHER" id="PTHR43490">
    <property type="entry name" value="(+)-NEOMENTHOL DEHYDROGENASE"/>
    <property type="match status" value="1"/>
</dbReference>
<dbReference type="PANTHER" id="PTHR43490:SF99">
    <property type="entry name" value="SHORT-CHAIN DEHYDROGENASE_REDUCTASE"/>
    <property type="match status" value="1"/>
</dbReference>
<dbReference type="Pfam" id="PF00106">
    <property type="entry name" value="adh_short"/>
    <property type="match status" value="1"/>
</dbReference>
<dbReference type="PRINTS" id="PR00081">
    <property type="entry name" value="GDHRDH"/>
</dbReference>
<dbReference type="SUPFAM" id="SSF51735">
    <property type="entry name" value="NAD(P)-binding Rossmann-fold domains"/>
    <property type="match status" value="1"/>
</dbReference>
<evidence type="ECO:0000250" key="1">
    <source>
        <dbReference type="UniProtKB" id="L0E2Z4"/>
    </source>
</evidence>
<evidence type="ECO:0000250" key="2">
    <source>
        <dbReference type="UniProtKB" id="O93868"/>
    </source>
</evidence>
<evidence type="ECO:0000250" key="3">
    <source>
        <dbReference type="UniProtKB" id="Q4WAY4"/>
    </source>
</evidence>
<evidence type="ECO:0000303" key="4">
    <source>
    </source>
</evidence>
<evidence type="ECO:0000305" key="5"/>
<evidence type="ECO:0000305" key="6">
    <source>
    </source>
</evidence>
<gene>
    <name evidence="4" type="primary">ATR10</name>
    <name type="ORF">S40285_03335</name>
</gene>
<sequence length="276" mass="29822">MARQSAEPPTDDGQSAKEIVVITGGNTGIGFEVARQLLCNYGNRFYVIIGSRTLGKGHTAVAALKQQGYEAVQAVQLDVTKEASIAAAAKIIGEQFGRIDVLHVNAGVLLEPTDINAKPVPFSETIMETMRTNVAGAAATVEGFTPLLSIGSNPRVVFMTSTAASAQLMHQYSSMTTAPALSASKAAENIIMIYYYHKYPNWKVNACYPGYRDTAMMRRYNASSLSKAYRQPDPVEEGAYNAVRLSLLGKDGETGTFTEYKGVGEDGQRQYSALPW</sequence>
<proteinExistence type="inferred from homology"/>
<accession>A0A084R1I4</accession>
<feature type="chain" id="PRO_0000442406" description="Short-chain dehydrogenase/reductase ATR10">
    <location>
        <begin position="1"/>
        <end position="276"/>
    </location>
</feature>
<feature type="active site" description="Proton donor" evidence="2">
    <location>
        <position position="161"/>
    </location>
</feature>
<feature type="active site" description="Lowers pKa of active site Tyr" evidence="2">
    <location>
        <position position="185"/>
    </location>
</feature>
<feature type="binding site" evidence="1">
    <location>
        <position position="29"/>
    </location>
    <ligand>
        <name>NADP(+)</name>
        <dbReference type="ChEBI" id="CHEBI:58349"/>
    </ligand>
</feature>
<feature type="binding site" evidence="1">
    <location>
        <position position="51"/>
    </location>
    <ligand>
        <name>NADP(+)</name>
        <dbReference type="ChEBI" id="CHEBI:58349"/>
    </ligand>
</feature>
<feature type="binding site" evidence="1">
    <location>
        <position position="78"/>
    </location>
    <ligand>
        <name>NADP(+)</name>
        <dbReference type="ChEBI" id="CHEBI:58349"/>
    </ligand>
</feature>
<feature type="binding site" evidence="2">
    <location>
        <position position="105"/>
    </location>
    <ligand>
        <name>NADP(+)</name>
        <dbReference type="ChEBI" id="CHEBI:58349"/>
    </ligand>
</feature>
<feature type="binding site" evidence="2">
    <location>
        <position position="185"/>
    </location>
    <ligand>
        <name>NADP(+)</name>
        <dbReference type="ChEBI" id="CHEBI:58349"/>
    </ligand>
</feature>
<feature type="binding site" evidence="1">
    <location>
        <position position="214"/>
    </location>
    <ligand>
        <name>NADP(+)</name>
        <dbReference type="ChEBI" id="CHEBI:58349"/>
    </ligand>
</feature>
<comment type="function">
    <text evidence="3 6">Short-chain dehydrogenase/reductase; part of the core atranone cluster (CAC) which products are predicted to catalyze most or all steps of mycotoxin atranone synthesis, starting from geranylgeranyl pyrophosphate (GGPP) (PubMed:25015739). The initial cyclization of GGPP to dolabellane is probably performed by the terpene cyclase ATR13 (PubMed:25015739). The Baeyer-Villiger oxidation near the end of the atranone synthesis, which converts atranones D and E to atranones F and G is predicted to be catalyzed by the monooxygenase ATR8 (PubMed:25015739). Of the CAC's other predicted gene products, the reducing PKS ATR6 might synthesize a polyketide chain (PubMed:25015739). This polyketide is probably transferred onto the atranone backbone by the polyketide transferase ATR5 (By similarity). Other predicted CAC products include 4 oxygenases (ATR2, ATR3, ATR4, and ATR14), 3 short-chain reductases (ATR7, ATR9, and ATR10), and a methyltransferase (ATR12) (PubMed:25015739). These may all be involved in the various steps of atranone biosynthesis, although their specific roles must await experimental determination (PubMed:25015739).</text>
</comment>
<comment type="pathway">
    <text evidence="6">Mycotoxin biosynthesis.</text>
</comment>
<comment type="similarity">
    <text evidence="5">Belongs to the short-chain dehydrogenases/reductases (SDR) family.</text>
</comment>